<comment type="function">
    <text evidence="1 8">Regulatory subunit of the ATP-dependent BRF-1 and BRF-5 ISWI chromatin remodeling complexes, which form ordered nucleosome arrays on chromatin and facilitate access to DNA during DNA-templated processes such as DNA replication, transcription, and repair (By similarity). Both complexes regulate the spacing of nucleosomes along the chromatin and have the ability to slide mononucleosomes to the center of a DNA template (By similarity). The BRF-1 ISWI chromatin remodeling complex has a lower ATP hydrolysis rate than the BRF-5 ISWI chromatin remodeling complex (By similarity). Chromatin reader protein, involved in positively modulating the rate of age-related behavioral deterioration (PubMed:32103178). Represses the expression of mitochondrial function-related genes, perhaps by occupying their promoter regions, working in concert with histone methyltransferase EHMT1 (PubMed:32103178).</text>
</comment>
<comment type="subunit">
    <text evidence="1 8">Component of the BRF-1 ISWI chromatin remodeling complex, at least composed of SMARCA1 and BAZ2B, which regulates the spacing of histone octamers on the DNA template to facilitate access to DNA (By similarity). Within the BRF-1 ISWI chromatin remodeling complex interacts with SMARCA1; the interaction is direct (By similarity). Component of the BRF-5 ISWI chromatin remodeling complex, at least composed of SMARCA5/SNF2H and BAZ2B, which regulates the spacing of histone octamers on the DNA template to facilitate access to DNA (By similarity). Within the BRF-5 ISWI chromatin remodeling complex interacts with SMARCA5/SNF2H; the interaction is direct (By similarity). Interacts with acetylated lysine residues on histone H1.4, H2A, H2B, H3 and H4 (in vitro) (By similarity). Interacts with EHMT1 (PubMed:32103178).</text>
</comment>
<comment type="subcellular location">
    <subcellularLocation>
        <location evidence="4">Nucleus</location>
    </subcellularLocation>
</comment>
<comment type="alternative products">
    <event type="alternative splicing"/>
    <isoform>
        <id>A2AUY4-1</id>
        <name evidence="9">1</name>
        <sequence type="displayed"/>
    </isoform>
    <isoform>
        <id>A2AUY4-2</id>
        <name evidence="9">2</name>
        <sequence type="described" ref="VSP_060916 VSP_060917 VSP_060918"/>
    </isoform>
</comment>
<comment type="similarity">
    <text evidence="9">Belongs to the WAL family.</text>
</comment>
<comment type="sequence caution" evidence="9">
    <conflict type="erroneous initiation">
        <sequence resource="EMBL-CDS" id="AAH42646"/>
    </conflict>
    <text>Truncated N-terminus.</text>
</comment>
<accession>A2AUY4</accession>
<accession>B9EKB5</accession>
<accession>Q8C0K4</accession>
<accession>Q8CFP4</accession>
<name>BAZ2B_MOUSE</name>
<keyword id="KW-0025">Alternative splicing</keyword>
<keyword id="KW-0103">Bromodomain</keyword>
<keyword id="KW-0175">Coiled coil</keyword>
<keyword id="KW-0479">Metal-binding</keyword>
<keyword id="KW-0539">Nucleus</keyword>
<keyword id="KW-1185">Reference proteome</keyword>
<keyword id="KW-0804">Transcription</keyword>
<keyword id="KW-0805">Transcription regulation</keyword>
<keyword id="KW-0862">Zinc</keyword>
<keyword id="KW-0863">Zinc-finger</keyword>
<feature type="chain" id="PRO_0000452177" description="Bromodomain adjacent to zinc finger domain protein 2B">
    <location>
        <begin position="1"/>
        <end position="2123"/>
    </location>
</feature>
<feature type="domain" description="MBD" evidence="6">
    <location>
        <begin position="690"/>
        <end position="765"/>
    </location>
</feature>
<feature type="domain" description="DDT" evidence="4">
    <location>
        <begin position="1004"/>
        <end position="1069"/>
    </location>
</feature>
<feature type="domain" description="Bromo" evidence="3">
    <location>
        <begin position="2015"/>
        <end position="2119"/>
    </location>
</feature>
<feature type="zinc finger region" description="PHD-type" evidence="5">
    <location>
        <begin position="1886"/>
        <end position="1936"/>
    </location>
</feature>
<feature type="region of interest" description="Disordered" evidence="7">
    <location>
        <begin position="1"/>
        <end position="129"/>
    </location>
</feature>
<feature type="region of interest" description="Disordered" evidence="7">
    <location>
        <begin position="144"/>
        <end position="306"/>
    </location>
</feature>
<feature type="region of interest" description="Disordered" evidence="7">
    <location>
        <begin position="357"/>
        <end position="402"/>
    </location>
</feature>
<feature type="region of interest" description="Disordered" evidence="7">
    <location>
        <begin position="473"/>
        <end position="534"/>
    </location>
</feature>
<feature type="region of interest" description="Disordered" evidence="7">
    <location>
        <begin position="546"/>
        <end position="691"/>
    </location>
</feature>
<feature type="region of interest" description="Disordered" evidence="7">
    <location>
        <begin position="756"/>
        <end position="793"/>
    </location>
</feature>
<feature type="region of interest" description="Disordered" evidence="7">
    <location>
        <begin position="937"/>
        <end position="960"/>
    </location>
</feature>
<feature type="region of interest" description="Disordered" evidence="7">
    <location>
        <begin position="1183"/>
        <end position="1260"/>
    </location>
</feature>
<feature type="region of interest" description="Disordered" evidence="7">
    <location>
        <begin position="1396"/>
        <end position="1444"/>
    </location>
</feature>
<feature type="region of interest" description="Disordered" evidence="7">
    <location>
        <begin position="1499"/>
        <end position="1526"/>
    </location>
</feature>
<feature type="region of interest" description="Disordered" evidence="7">
    <location>
        <begin position="1588"/>
        <end position="1614"/>
    </location>
</feature>
<feature type="region of interest" description="Disordered" evidence="7">
    <location>
        <begin position="1949"/>
        <end position="2013"/>
    </location>
</feature>
<feature type="coiled-coil region" evidence="2">
    <location>
        <begin position="1254"/>
        <end position="1281"/>
    </location>
</feature>
<feature type="compositionally biased region" description="Low complexity" evidence="7">
    <location>
        <begin position="7"/>
        <end position="46"/>
    </location>
</feature>
<feature type="compositionally biased region" description="Pro residues" evidence="7">
    <location>
        <begin position="83"/>
        <end position="95"/>
    </location>
</feature>
<feature type="compositionally biased region" description="Polar residues" evidence="7">
    <location>
        <begin position="100"/>
        <end position="116"/>
    </location>
</feature>
<feature type="compositionally biased region" description="Low complexity" evidence="7">
    <location>
        <begin position="147"/>
        <end position="157"/>
    </location>
</feature>
<feature type="compositionally biased region" description="Low complexity" evidence="7">
    <location>
        <begin position="193"/>
        <end position="216"/>
    </location>
</feature>
<feature type="compositionally biased region" description="Acidic residues" evidence="7">
    <location>
        <begin position="217"/>
        <end position="243"/>
    </location>
</feature>
<feature type="compositionally biased region" description="Basic and acidic residues" evidence="7">
    <location>
        <begin position="259"/>
        <end position="277"/>
    </location>
</feature>
<feature type="compositionally biased region" description="Low complexity" evidence="7">
    <location>
        <begin position="291"/>
        <end position="306"/>
    </location>
</feature>
<feature type="compositionally biased region" description="Low complexity" evidence="7">
    <location>
        <begin position="366"/>
        <end position="379"/>
    </location>
</feature>
<feature type="compositionally biased region" description="Polar residues" evidence="7">
    <location>
        <begin position="473"/>
        <end position="502"/>
    </location>
</feature>
<feature type="compositionally biased region" description="Basic and acidic residues" evidence="7">
    <location>
        <begin position="546"/>
        <end position="559"/>
    </location>
</feature>
<feature type="compositionally biased region" description="Acidic residues" evidence="7">
    <location>
        <begin position="560"/>
        <end position="587"/>
    </location>
</feature>
<feature type="compositionally biased region" description="Low complexity" evidence="7">
    <location>
        <begin position="588"/>
        <end position="597"/>
    </location>
</feature>
<feature type="compositionally biased region" description="Acidic residues" evidence="7">
    <location>
        <begin position="598"/>
        <end position="615"/>
    </location>
</feature>
<feature type="compositionally biased region" description="Low complexity" evidence="7">
    <location>
        <begin position="628"/>
        <end position="637"/>
    </location>
</feature>
<feature type="compositionally biased region" description="Low complexity" evidence="7">
    <location>
        <begin position="671"/>
        <end position="683"/>
    </location>
</feature>
<feature type="compositionally biased region" description="Basic and acidic residues" evidence="7">
    <location>
        <begin position="756"/>
        <end position="778"/>
    </location>
</feature>
<feature type="compositionally biased region" description="Acidic residues" evidence="7">
    <location>
        <begin position="1214"/>
        <end position="1238"/>
    </location>
</feature>
<feature type="compositionally biased region" description="Basic and acidic residues" evidence="7">
    <location>
        <begin position="1239"/>
        <end position="1248"/>
    </location>
</feature>
<feature type="compositionally biased region" description="Polar residues" evidence="7">
    <location>
        <begin position="1408"/>
        <end position="1422"/>
    </location>
</feature>
<feature type="compositionally biased region" description="Polar residues" evidence="7">
    <location>
        <begin position="1430"/>
        <end position="1444"/>
    </location>
</feature>
<feature type="compositionally biased region" description="Pro residues" evidence="7">
    <location>
        <begin position="1505"/>
        <end position="1515"/>
    </location>
</feature>
<feature type="compositionally biased region" description="Low complexity" evidence="7">
    <location>
        <begin position="1588"/>
        <end position="1600"/>
    </location>
</feature>
<feature type="compositionally biased region" description="Basic and acidic residues" evidence="7">
    <location>
        <begin position="1984"/>
        <end position="1995"/>
    </location>
</feature>
<feature type="compositionally biased region" description="Polar residues" evidence="7">
    <location>
        <begin position="1996"/>
        <end position="2010"/>
    </location>
</feature>
<feature type="splice variant" id="VSP_060916" description="In isoform 2.">
    <original>A</original>
    <variation>HLFRAAGDQPFNLSTVPSAFPMLSHPGFGLHSASSGHSEFGGLGTLGTPTALAAHPQLTSFP</variation>
    <location>
        <position position="67"/>
    </location>
</feature>
<feature type="splice variant" id="VSP_060917" description="In isoform 2.">
    <original>Q</original>
    <variation>QELERHRLDM</variation>
    <location>
        <position position="920"/>
    </location>
</feature>
<feature type="splice variant" id="VSP_060918" description="In isoform 2.">
    <location>
        <begin position="1808"/>
        <end position="1842"/>
    </location>
</feature>
<feature type="sequence conflict" description="In Ref. 3; AAI50815." evidence="9" ref="3">
    <original>S</original>
    <variation>P</variation>
    <location>
        <position position="107"/>
    </location>
</feature>
<feature type="sequence conflict" description="In Ref. 1; BAC27164." evidence="9" ref="1">
    <original>Q</original>
    <variation>R</variation>
    <location>
        <position position="861"/>
    </location>
</feature>
<protein>
    <recommendedName>
        <fullName evidence="9">Bromodomain adjacent to zinc finger domain protein 2B</fullName>
    </recommendedName>
</protein>
<sequence>MESGELLPSSPASSTTPTSSSAPSVASAVSKSSLSTGAASLSSTASPCVLEAGKSKIKVSPDSVSGAEWWRTTDGHSRAGTPFFPPLLGIPPLFAPPAQNHDSSFHSRTSGKSSRNGPEKGINGSVNGTSAASVLGVNASVVATPASSSMGQNQSTSSGGGTLKCHQEQNKSQPVDARADRIKDKKPRKKAMESSSNSDSDSGTSSDTSSEGISSSDSDDLEEEEEEDQSVEESEDDDSDSETEAQHKSNNQVLLHGISDPKTDGQKATEKAQERRTHQPLPPVSESQTHPPFQSQQKQPQVLSQQLPFIFQSSQAKEESVTKHTSVIQSTGLVSNVKPLSLVNQAKKETYRKLVVPSPDVLKAGNKNTSEESSSLTSELRSKREQYKQTFPSQGKKQEMGKSLKKVIAALSNTKATSSSPAHPKLPLDNNHPNPFLTNALLGNHQPNGVIQSVIQEAPLALTTKTKMQSKINENVSSSTPFSSPVNLSTSGRRAPGSQTPALPSASPILHSSGKEKRVSNDATPLKAHHHPHPAAAAAALVEQFRGTDSDVPSSKDSEDSNEDEEEDDEEEDEEDDEDDESDDSQSESDSNSQSDSEGSEDDEEKDQEESDSDTEGEKPAVNLTQTSSSAKSPPSSLTAHSAPHLHIGSPPGSAPAALCSESQPPAFLGTSSSTLTSTPHSGTSKRRRVADDQELRIPLDYGWQRETRVRNFGGRLPGEVAYYAPCGKKLRQCPDMVKGMQWCLLKEEDVIPRIRAMDGRRGRPPNPDRPRAREESRMKRRKGRPPNVGSAEFLDNTDAKLLRKLQAQEIARQAAQIKLLRKLQKQEQARVAKEAKKQQAIMAAEEKRKQKEQMKIIKQQEKIKRIQQIRMEKELRAQQILEAKKKKKEEAANAKLLEAEKRTKEKELRRQQAVLLKHQERERRRQHVMLMKAMEARKKAEEKERLKQEKRDEKRLNKERKLEQRRLELEMAKELKKPKEDMCLADQKPLPEWPRIPGLVLSGTTFSDCLMVVQFLRNFGKVLGFDVNIDVPNLSVLQEGLLNIGDSMGEVQDLLVRLLSAAVCDPGLITGYKAKTALGEHLLNVGVNRDNVSEVLQIFMEAHCGQTELTESLKTKAFQAHTPAQKASILAFLVNELACSKSVVSEIDKNIEYMSNLRRDKWMVEGKLRKLRIIHAKKTGKRDASGGIDLGEEQHPLGTPTPGRKRRRKGGDSDYDDDDDDDSDDQADEDEEDEEDKDDKKGKKTDICEDEDEGDQTASVEELEKQIEKLSKQQSQYRRKLFDASHSLRSMMFGQDRYRRRYWILPQCGGIFVEGMESGEGLEEIAKEKEKLKKAESLQIKEEVFETSAETLNCSIRDHCEQKDDPKEKDNTNLFLQKPGSFSKLSKLLEVAKMPPESDVMTPPKVNVSTNGGPLSHQNSGKHPLGSVPSATTAQSPVGKTDASLFSSGSGSCGKFYSPLPNDQLLKTLTEKNRQWFSLLPKTPCDDTSLTHADLSTTLVTPQSQPPSKSPSPAPAALLGPSSVQSPPGLNPFALSPLQVKGGVSMMGLQFCGWPAGVLASNVPFTSPLPALGSGLGLPEGNGSSSFLTSSVASSKSDSPVPPAERPSSAQPVAVEVAKPVDFPSPKPIPEEMQFGWWRIIDPEDLKTLLKVLHLRGIREKALQKQIQKHLDYITQACVRNKDVAIIELNENEDNQVTRDLVENWSVEEQAMELDLSILQQVEDLERRVASASLQVKGWMCPEPASEREDLVYFEHKSLTKLFKEHDGELTGDEENSAHALARKSDNPLDIAVTRLADLERNIERRYLKSPLSTTIQIKLDNVGTVTVPAPAPSISGDGDGIEEDIAPGLRVWRRALAEARSAAQVALCIQQLQRSIAWEKSIMKVYCQICRKGDNEELLLLCDGCDKGCHTYCHRPKITTIPDGDWFCPACISKASGQSIKIKKIHVKGKKTNDSKKTKKGNVAGDTEDEDSASTSSSLKRGSKELKKRKMEETTSLNLSKAESTTSIKKPKKDESRDLALCSMILTEMETHEDSWPFLLPVNLKLVPGYKKVIKKPMDFSTIREKLNNGQYPNFETFALDVRLVFDNCETFNEDDSDIGRAGHSMRKYFEKKWTDTFKVS</sequence>
<dbReference type="EMBL" id="AK030867">
    <property type="protein sequence ID" value="BAC27164.1"/>
    <property type="molecule type" value="mRNA"/>
</dbReference>
<dbReference type="EMBL" id="AL929211">
    <property type="status" value="NOT_ANNOTATED_CDS"/>
    <property type="molecule type" value="Genomic_DNA"/>
</dbReference>
<dbReference type="EMBL" id="AL929242">
    <property type="status" value="NOT_ANNOTATED_CDS"/>
    <property type="molecule type" value="Genomic_DNA"/>
</dbReference>
<dbReference type="EMBL" id="AL935326">
    <property type="status" value="NOT_ANNOTATED_CDS"/>
    <property type="molecule type" value="Genomic_DNA"/>
</dbReference>
<dbReference type="EMBL" id="BX649357">
    <property type="status" value="NOT_ANNOTATED_CDS"/>
    <property type="molecule type" value="Genomic_DNA"/>
</dbReference>
<dbReference type="EMBL" id="BC042646">
    <property type="protein sequence ID" value="AAH42646.1"/>
    <property type="status" value="ALT_INIT"/>
    <property type="molecule type" value="mRNA"/>
</dbReference>
<dbReference type="EMBL" id="BC150814">
    <property type="protein sequence ID" value="AAI50815.1"/>
    <property type="molecule type" value="mRNA"/>
</dbReference>
<dbReference type="CCDS" id="CCDS16056.1">
    <molecule id="A2AUY4-1"/>
</dbReference>
<dbReference type="RefSeq" id="NP_001001182.2">
    <molecule id="A2AUY4-1"/>
    <property type="nucleotide sequence ID" value="NM_001001182.3"/>
</dbReference>
<dbReference type="RefSeq" id="XP_017174584.1">
    <molecule id="A2AUY4-2"/>
    <property type="nucleotide sequence ID" value="XM_017319095.3"/>
</dbReference>
<dbReference type="RefSeq" id="XP_017174585.1">
    <molecule id="A2AUY4-2"/>
    <property type="nucleotide sequence ID" value="XM_017319096.2"/>
</dbReference>
<dbReference type="RefSeq" id="XP_017174591.1">
    <property type="nucleotide sequence ID" value="XM_017319102.1"/>
</dbReference>
<dbReference type="RefSeq" id="XP_030107707.1">
    <molecule id="A2AUY4-1"/>
    <property type="nucleotide sequence ID" value="XM_030251847.2"/>
</dbReference>
<dbReference type="SMR" id="A2AUY4"/>
<dbReference type="FunCoup" id="A2AUY4">
    <property type="interactions" value="3503"/>
</dbReference>
<dbReference type="IntAct" id="A2AUY4">
    <property type="interactions" value="4"/>
</dbReference>
<dbReference type="STRING" id="10090.ENSMUSP00000108169"/>
<dbReference type="GlyGen" id="A2AUY4">
    <property type="glycosylation" value="2 sites, 1 N-linked glycan (1 site)"/>
</dbReference>
<dbReference type="iPTMnet" id="A2AUY4"/>
<dbReference type="PhosphoSitePlus" id="A2AUY4"/>
<dbReference type="jPOST" id="A2AUY4"/>
<dbReference type="PaxDb" id="10090-ENSMUSP00000108169"/>
<dbReference type="PeptideAtlas" id="A2AUY4"/>
<dbReference type="ProteomicsDB" id="343345"/>
<dbReference type="Antibodypedia" id="19022">
    <property type="antibodies" value="129 antibodies from 26 providers"/>
</dbReference>
<dbReference type="DNASU" id="407823"/>
<dbReference type="Ensembl" id="ENSMUST00000090925.13">
    <molecule id="A2AUY4-1"/>
    <property type="protein sequence ID" value="ENSMUSP00000088443.7"/>
    <property type="gene ID" value="ENSMUSG00000026987.17"/>
</dbReference>
<dbReference type="Ensembl" id="ENSMUST00000112550.8">
    <molecule id="A2AUY4-1"/>
    <property type="protein sequence ID" value="ENSMUSP00000108169.2"/>
    <property type="gene ID" value="ENSMUSG00000026987.17"/>
</dbReference>
<dbReference type="GeneID" id="407823"/>
<dbReference type="KEGG" id="mmu:407823"/>
<dbReference type="UCSC" id="uc008jtr.1">
    <molecule id="A2AUY4-1"/>
    <property type="organism name" value="mouse"/>
</dbReference>
<dbReference type="AGR" id="MGI:2442782"/>
<dbReference type="CTD" id="29994"/>
<dbReference type="MGI" id="MGI:2442782">
    <property type="gene designation" value="Baz2b"/>
</dbReference>
<dbReference type="VEuPathDB" id="HostDB:ENSMUSG00000026987"/>
<dbReference type="eggNOG" id="KOG1245">
    <property type="taxonomic scope" value="Eukaryota"/>
</dbReference>
<dbReference type="GeneTree" id="ENSGT00940000155359"/>
<dbReference type="HOGENOM" id="CLU_000899_0_0_1"/>
<dbReference type="InParanoid" id="A2AUY4"/>
<dbReference type="OMA" id="APTENRC"/>
<dbReference type="OrthoDB" id="21449at2759"/>
<dbReference type="PhylomeDB" id="A2AUY4"/>
<dbReference type="TreeFam" id="TF329083"/>
<dbReference type="BioGRID-ORCS" id="407823">
    <property type="hits" value="6 hits in 80 CRISPR screens"/>
</dbReference>
<dbReference type="ChiTaRS" id="Baz2b">
    <property type="organism name" value="mouse"/>
</dbReference>
<dbReference type="PRO" id="PR:A2AUY4"/>
<dbReference type="Proteomes" id="UP000000589">
    <property type="component" value="Chromosome 2"/>
</dbReference>
<dbReference type="RNAct" id="A2AUY4">
    <property type="molecule type" value="protein"/>
</dbReference>
<dbReference type="Bgee" id="ENSMUSG00000026987">
    <property type="expression patterns" value="Expressed in retinal neural layer and 257 other cell types or tissues"/>
</dbReference>
<dbReference type="ExpressionAtlas" id="A2AUY4">
    <property type="expression patterns" value="baseline and differential"/>
</dbReference>
<dbReference type="GO" id="GO:0005634">
    <property type="term" value="C:nucleus"/>
    <property type="evidence" value="ECO:0007669"/>
    <property type="project" value="UniProtKB-SubCell"/>
</dbReference>
<dbReference type="GO" id="GO:0003677">
    <property type="term" value="F:DNA binding"/>
    <property type="evidence" value="ECO:0007669"/>
    <property type="project" value="InterPro"/>
</dbReference>
<dbReference type="GO" id="GO:0008270">
    <property type="term" value="F:zinc ion binding"/>
    <property type="evidence" value="ECO:0007669"/>
    <property type="project" value="UniProtKB-KW"/>
</dbReference>
<dbReference type="CDD" id="cd05503">
    <property type="entry name" value="Bromo_BAZ2A_B_like"/>
    <property type="match status" value="1"/>
</dbReference>
<dbReference type="CDD" id="cd15630">
    <property type="entry name" value="PHD_BAZ2B"/>
    <property type="match status" value="1"/>
</dbReference>
<dbReference type="FunFam" id="3.30.40.10:FF:000199">
    <property type="entry name" value="Bromodomain adjacent to zinc finger domain 2B"/>
    <property type="match status" value="1"/>
</dbReference>
<dbReference type="FunFam" id="1.20.920.10:FF:000023">
    <property type="entry name" value="Bromodomain adjacent to zinc finger domain protein 2B"/>
    <property type="match status" value="1"/>
</dbReference>
<dbReference type="Gene3D" id="1.20.920.10">
    <property type="entry name" value="Bromodomain-like"/>
    <property type="match status" value="1"/>
</dbReference>
<dbReference type="Gene3D" id="3.30.890.10">
    <property type="entry name" value="Methyl-cpg-binding Protein 2, Chain A"/>
    <property type="match status" value="1"/>
</dbReference>
<dbReference type="Gene3D" id="3.30.40.10">
    <property type="entry name" value="Zinc/RING finger domain, C3HC4 (zinc finger)"/>
    <property type="match status" value="1"/>
</dbReference>
<dbReference type="InterPro" id="IPR037374">
    <property type="entry name" value="BAZ2A/B_Bromo"/>
</dbReference>
<dbReference type="InterPro" id="IPR001487">
    <property type="entry name" value="Bromodomain"/>
</dbReference>
<dbReference type="InterPro" id="IPR036427">
    <property type="entry name" value="Bromodomain-like_sf"/>
</dbReference>
<dbReference type="InterPro" id="IPR018359">
    <property type="entry name" value="Bromodomain_CS"/>
</dbReference>
<dbReference type="InterPro" id="IPR018501">
    <property type="entry name" value="DDT_dom"/>
</dbReference>
<dbReference type="InterPro" id="IPR016177">
    <property type="entry name" value="DNA-bd_dom_sf"/>
</dbReference>
<dbReference type="InterPro" id="IPR001739">
    <property type="entry name" value="Methyl_CpG_DNA-bd"/>
</dbReference>
<dbReference type="InterPro" id="IPR028942">
    <property type="entry name" value="WHIM1_dom"/>
</dbReference>
<dbReference type="InterPro" id="IPR028941">
    <property type="entry name" value="WHIM2_dom"/>
</dbReference>
<dbReference type="InterPro" id="IPR011011">
    <property type="entry name" value="Znf_FYVE_PHD"/>
</dbReference>
<dbReference type="InterPro" id="IPR001965">
    <property type="entry name" value="Znf_PHD"/>
</dbReference>
<dbReference type="InterPro" id="IPR019787">
    <property type="entry name" value="Znf_PHD-finger"/>
</dbReference>
<dbReference type="InterPro" id="IPR013083">
    <property type="entry name" value="Znf_RING/FYVE/PHD"/>
</dbReference>
<dbReference type="PANTHER" id="PTHR45915:SF2">
    <property type="entry name" value="TOUTATIS, ISOFORM E"/>
    <property type="match status" value="1"/>
</dbReference>
<dbReference type="PANTHER" id="PTHR45915">
    <property type="entry name" value="TRANSCRIPTION INTERMEDIARY FACTOR"/>
    <property type="match status" value="1"/>
</dbReference>
<dbReference type="Pfam" id="PF00439">
    <property type="entry name" value="Bromodomain"/>
    <property type="match status" value="1"/>
</dbReference>
<dbReference type="Pfam" id="PF02791">
    <property type="entry name" value="DDT"/>
    <property type="match status" value="1"/>
</dbReference>
<dbReference type="Pfam" id="PF01429">
    <property type="entry name" value="MBD"/>
    <property type="match status" value="1"/>
</dbReference>
<dbReference type="Pfam" id="PF00628">
    <property type="entry name" value="PHD"/>
    <property type="match status" value="1"/>
</dbReference>
<dbReference type="Pfam" id="PF15612">
    <property type="entry name" value="WHIM1"/>
    <property type="match status" value="1"/>
</dbReference>
<dbReference type="Pfam" id="PF15613">
    <property type="entry name" value="WSD"/>
    <property type="match status" value="1"/>
</dbReference>
<dbReference type="PRINTS" id="PR00503">
    <property type="entry name" value="BROMODOMAIN"/>
</dbReference>
<dbReference type="SMART" id="SM00297">
    <property type="entry name" value="BROMO"/>
    <property type="match status" value="1"/>
</dbReference>
<dbReference type="SMART" id="SM00571">
    <property type="entry name" value="DDT"/>
    <property type="match status" value="1"/>
</dbReference>
<dbReference type="SMART" id="SM00391">
    <property type="entry name" value="MBD"/>
    <property type="match status" value="1"/>
</dbReference>
<dbReference type="SMART" id="SM00249">
    <property type="entry name" value="PHD"/>
    <property type="match status" value="1"/>
</dbReference>
<dbReference type="SUPFAM" id="SSF47370">
    <property type="entry name" value="Bromodomain"/>
    <property type="match status" value="1"/>
</dbReference>
<dbReference type="SUPFAM" id="SSF54171">
    <property type="entry name" value="DNA-binding domain"/>
    <property type="match status" value="1"/>
</dbReference>
<dbReference type="SUPFAM" id="SSF57903">
    <property type="entry name" value="FYVE/PHD zinc finger"/>
    <property type="match status" value="1"/>
</dbReference>
<dbReference type="PROSITE" id="PS00633">
    <property type="entry name" value="BROMODOMAIN_1"/>
    <property type="match status" value="1"/>
</dbReference>
<dbReference type="PROSITE" id="PS50014">
    <property type="entry name" value="BROMODOMAIN_2"/>
    <property type="match status" value="1"/>
</dbReference>
<dbReference type="PROSITE" id="PS50827">
    <property type="entry name" value="DDT"/>
    <property type="match status" value="1"/>
</dbReference>
<dbReference type="PROSITE" id="PS50982">
    <property type="entry name" value="MBD"/>
    <property type="match status" value="1"/>
</dbReference>
<dbReference type="PROSITE" id="PS50016">
    <property type="entry name" value="ZF_PHD_2"/>
    <property type="match status" value="1"/>
</dbReference>
<gene>
    <name evidence="13" type="primary">Baz2b</name>
</gene>
<reference evidence="12" key="1">
    <citation type="journal article" date="2005" name="Science">
        <title>The Transcriptional Landscape of the Mammalian Genome.</title>
        <authorList>
            <consortium name="The FANTOM Consortium"/>
            <consortium name="Riken Genome Exploration Research Group and Genome Science Group (Genome Network Project Core Group)"/>
        </authorList>
    </citation>
    <scope>NUCLEOTIDE SEQUENCE [LARGE SCALE MRNA] OF 1-861 (ISOFORM 1)</scope>
    <source>
        <strain evidence="12">C57BL/6J</strain>
        <tissue evidence="12">Thymus</tissue>
    </source>
</reference>
<reference evidence="14" key="2">
    <citation type="journal article" date="2009" name="PLoS Biol.">
        <title>Lineage-specific biology revealed by a finished genome assembly of the mouse.</title>
        <authorList>
            <person name="Church D.M."/>
            <person name="Goodstadt L."/>
            <person name="Hillier L.W."/>
            <person name="Zody M.C."/>
            <person name="Goldstein S."/>
            <person name="She X."/>
            <person name="Bult C.J."/>
            <person name="Agarwala R."/>
            <person name="Cherry J.L."/>
            <person name="DiCuccio M."/>
            <person name="Hlavina W."/>
            <person name="Kapustin Y."/>
            <person name="Meric P."/>
            <person name="Maglott D."/>
            <person name="Birtle Z."/>
            <person name="Marques A.C."/>
            <person name="Graves T."/>
            <person name="Zhou S."/>
            <person name="Teague B."/>
            <person name="Potamousis K."/>
            <person name="Churas C."/>
            <person name="Place M."/>
            <person name="Herschleb J."/>
            <person name="Runnheim R."/>
            <person name="Forrest D."/>
            <person name="Amos-Landgraf J."/>
            <person name="Schwartz D.C."/>
            <person name="Cheng Z."/>
            <person name="Lindblad-Toh K."/>
            <person name="Eichler E.E."/>
            <person name="Ponting C.P."/>
        </authorList>
    </citation>
    <scope>NUCLEOTIDE SEQUENCE [LARGE SCALE GENOMIC DNA]</scope>
    <source>
        <strain evidence="14">C57BL/6J</strain>
    </source>
</reference>
<reference evidence="11" key="3">
    <citation type="journal article" date="2004" name="Genome Res.">
        <title>The status, quality, and expansion of the NIH full-length cDNA project: the Mammalian Gene Collection (MGC).</title>
        <authorList>
            <consortium name="The MGC Project Team"/>
        </authorList>
    </citation>
    <scope>NUCLEOTIDE SEQUENCE [LARGE SCALE MRNA] (ISOFORM 2)</scope>
    <scope>NUCLEOTIDE SEQUENCE [LARGE SCALE MRNA] OF 1943-2123 (ISOFORMS 1/2)</scope>
    <source>
        <tissue evidence="10">Eye</tissue>
        <tissue evidence="11">Testis</tissue>
    </source>
</reference>
<reference evidence="9" key="4">
    <citation type="journal article" date="2020" name="Nature">
        <title>Two conserved epigenetic regulators prevent healthy ageing.</title>
        <authorList>
            <person name="Yuan J."/>
            <person name="Chang S.Y."/>
            <person name="Yin S.G."/>
            <person name="Liu Z.Y."/>
            <person name="Cheng X."/>
            <person name="Liu X.J."/>
            <person name="Jiang Q."/>
            <person name="Gao G."/>
            <person name="Lin D.Y."/>
            <person name="Kang X.L."/>
            <person name="Ye S.W."/>
            <person name="Chen Z."/>
            <person name="Yin J.A."/>
            <person name="Hao P."/>
            <person name="Jiang L."/>
            <person name="Cai S.Q."/>
        </authorList>
    </citation>
    <scope>FUNCTION</scope>
    <scope>INTERACTION WITH EHMT1</scope>
</reference>
<proteinExistence type="evidence at protein level"/>
<organism evidence="14">
    <name type="scientific">Mus musculus</name>
    <name type="common">Mouse</name>
    <dbReference type="NCBI Taxonomy" id="10090"/>
    <lineage>
        <taxon>Eukaryota</taxon>
        <taxon>Metazoa</taxon>
        <taxon>Chordata</taxon>
        <taxon>Craniata</taxon>
        <taxon>Vertebrata</taxon>
        <taxon>Euteleostomi</taxon>
        <taxon>Mammalia</taxon>
        <taxon>Eutheria</taxon>
        <taxon>Euarchontoglires</taxon>
        <taxon>Glires</taxon>
        <taxon>Rodentia</taxon>
        <taxon>Myomorpha</taxon>
        <taxon>Muroidea</taxon>
        <taxon>Muridae</taxon>
        <taxon>Murinae</taxon>
        <taxon>Mus</taxon>
        <taxon>Mus</taxon>
    </lineage>
</organism>
<evidence type="ECO:0000250" key="1">
    <source>
        <dbReference type="UniProtKB" id="Q9UIF8"/>
    </source>
</evidence>
<evidence type="ECO:0000255" key="2"/>
<evidence type="ECO:0000255" key="3">
    <source>
        <dbReference type="PROSITE-ProRule" id="PRU00035"/>
    </source>
</evidence>
<evidence type="ECO:0000255" key="4">
    <source>
        <dbReference type="PROSITE-ProRule" id="PRU00063"/>
    </source>
</evidence>
<evidence type="ECO:0000255" key="5">
    <source>
        <dbReference type="PROSITE-ProRule" id="PRU00146"/>
    </source>
</evidence>
<evidence type="ECO:0000255" key="6">
    <source>
        <dbReference type="PROSITE-ProRule" id="PRU00338"/>
    </source>
</evidence>
<evidence type="ECO:0000256" key="7">
    <source>
        <dbReference type="SAM" id="MobiDB-lite"/>
    </source>
</evidence>
<evidence type="ECO:0000269" key="8">
    <source>
    </source>
</evidence>
<evidence type="ECO:0000305" key="9"/>
<evidence type="ECO:0000312" key="10">
    <source>
        <dbReference type="EMBL" id="AAH42646.1"/>
    </source>
</evidence>
<evidence type="ECO:0000312" key="11">
    <source>
        <dbReference type="EMBL" id="AAI50815.1"/>
    </source>
</evidence>
<evidence type="ECO:0000312" key="12">
    <source>
        <dbReference type="EMBL" id="BAC27164.1"/>
    </source>
</evidence>
<evidence type="ECO:0000312" key="13">
    <source>
        <dbReference type="MGI" id="MGI:2442782"/>
    </source>
</evidence>
<evidence type="ECO:0000312" key="14">
    <source>
        <dbReference type="Proteomes" id="UP000000589"/>
    </source>
</evidence>